<sequence>MARVTVQDAVEKIGNRFDLVLVAARRARQMQTGGKEPLVPEENDKTTVLALREIEEGLINNQILDVRERQEQQEQEAAELQAVTAIAEGRR</sequence>
<keyword id="KW-0240">DNA-directed RNA polymerase</keyword>
<keyword id="KW-0548">Nucleotidyltransferase</keyword>
<keyword id="KW-0804">Transcription</keyword>
<keyword id="KW-0808">Transferase</keyword>
<feature type="chain" id="PRO_1000205516" description="DNA-directed RNA polymerase subunit omega">
    <location>
        <begin position="1"/>
        <end position="91"/>
    </location>
</feature>
<dbReference type="EC" id="2.7.7.6" evidence="1"/>
<dbReference type="EMBL" id="CP001600">
    <property type="protein sequence ID" value="ACR67293.1"/>
    <property type="molecule type" value="Genomic_DNA"/>
</dbReference>
<dbReference type="RefSeq" id="WP_015869517.1">
    <property type="nucleotide sequence ID" value="NZ_CP169062.1"/>
</dbReference>
<dbReference type="SMR" id="C5B9B3"/>
<dbReference type="STRING" id="67780.B6E78_11335"/>
<dbReference type="GeneID" id="69537147"/>
<dbReference type="KEGG" id="eic:NT01EI_0033"/>
<dbReference type="PATRIC" id="fig|634503.3.peg.30"/>
<dbReference type="HOGENOM" id="CLU_125406_5_3_6"/>
<dbReference type="OrthoDB" id="9796300at2"/>
<dbReference type="Proteomes" id="UP000001485">
    <property type="component" value="Chromosome"/>
</dbReference>
<dbReference type="GO" id="GO:0000428">
    <property type="term" value="C:DNA-directed RNA polymerase complex"/>
    <property type="evidence" value="ECO:0007669"/>
    <property type="project" value="UniProtKB-KW"/>
</dbReference>
<dbReference type="GO" id="GO:0003677">
    <property type="term" value="F:DNA binding"/>
    <property type="evidence" value="ECO:0007669"/>
    <property type="project" value="UniProtKB-UniRule"/>
</dbReference>
<dbReference type="GO" id="GO:0003899">
    <property type="term" value="F:DNA-directed RNA polymerase activity"/>
    <property type="evidence" value="ECO:0007669"/>
    <property type="project" value="UniProtKB-UniRule"/>
</dbReference>
<dbReference type="GO" id="GO:0006351">
    <property type="term" value="P:DNA-templated transcription"/>
    <property type="evidence" value="ECO:0007669"/>
    <property type="project" value="UniProtKB-UniRule"/>
</dbReference>
<dbReference type="FunFam" id="3.90.940.10:FF:000001">
    <property type="entry name" value="DNA-directed RNA polymerase subunit omega"/>
    <property type="match status" value="1"/>
</dbReference>
<dbReference type="Gene3D" id="3.90.940.10">
    <property type="match status" value="1"/>
</dbReference>
<dbReference type="HAMAP" id="MF_00366">
    <property type="entry name" value="RNApol_bact_RpoZ"/>
    <property type="match status" value="1"/>
</dbReference>
<dbReference type="InterPro" id="IPR003716">
    <property type="entry name" value="DNA-dir_RNA_pol_omega"/>
</dbReference>
<dbReference type="InterPro" id="IPR006110">
    <property type="entry name" value="Pol_omega/Rpo6/RPB6"/>
</dbReference>
<dbReference type="InterPro" id="IPR036161">
    <property type="entry name" value="RPB6/omega-like_sf"/>
</dbReference>
<dbReference type="NCBIfam" id="TIGR00690">
    <property type="entry name" value="rpoZ"/>
    <property type="match status" value="1"/>
</dbReference>
<dbReference type="PANTHER" id="PTHR34476">
    <property type="entry name" value="DNA-DIRECTED RNA POLYMERASE SUBUNIT OMEGA"/>
    <property type="match status" value="1"/>
</dbReference>
<dbReference type="PANTHER" id="PTHR34476:SF1">
    <property type="entry name" value="DNA-DIRECTED RNA POLYMERASE SUBUNIT OMEGA"/>
    <property type="match status" value="1"/>
</dbReference>
<dbReference type="Pfam" id="PF01192">
    <property type="entry name" value="RNA_pol_Rpb6"/>
    <property type="match status" value="1"/>
</dbReference>
<dbReference type="SMART" id="SM01409">
    <property type="entry name" value="RNA_pol_Rpb6"/>
    <property type="match status" value="1"/>
</dbReference>
<dbReference type="SUPFAM" id="SSF63562">
    <property type="entry name" value="RPB6/omega subunit-like"/>
    <property type="match status" value="1"/>
</dbReference>
<reference key="1">
    <citation type="submission" date="2009-03" db="EMBL/GenBank/DDBJ databases">
        <title>Complete genome sequence of Edwardsiella ictaluri 93-146.</title>
        <authorList>
            <person name="Williams M.L."/>
            <person name="Gillaspy A.F."/>
            <person name="Dyer D.W."/>
            <person name="Thune R.L."/>
            <person name="Waldbieser G.C."/>
            <person name="Schuster S.C."/>
            <person name="Gipson J."/>
            <person name="Zaitshik J."/>
            <person name="Landry C."/>
            <person name="Lawrence M.L."/>
        </authorList>
    </citation>
    <scope>NUCLEOTIDE SEQUENCE [LARGE SCALE GENOMIC DNA]</scope>
    <source>
        <strain>93-146</strain>
    </source>
</reference>
<protein>
    <recommendedName>
        <fullName evidence="1">DNA-directed RNA polymerase subunit omega</fullName>
        <shortName evidence="1">RNAP omega subunit</shortName>
        <ecNumber evidence="1">2.7.7.6</ecNumber>
    </recommendedName>
    <alternativeName>
        <fullName evidence="1">RNA polymerase omega subunit</fullName>
    </alternativeName>
    <alternativeName>
        <fullName evidence="1">Transcriptase subunit omega</fullName>
    </alternativeName>
</protein>
<organism>
    <name type="scientific">Edwardsiella ictaluri (strain 93-146)</name>
    <dbReference type="NCBI Taxonomy" id="634503"/>
    <lineage>
        <taxon>Bacteria</taxon>
        <taxon>Pseudomonadati</taxon>
        <taxon>Pseudomonadota</taxon>
        <taxon>Gammaproteobacteria</taxon>
        <taxon>Enterobacterales</taxon>
        <taxon>Hafniaceae</taxon>
        <taxon>Edwardsiella</taxon>
    </lineage>
</organism>
<proteinExistence type="inferred from homology"/>
<evidence type="ECO:0000255" key="1">
    <source>
        <dbReference type="HAMAP-Rule" id="MF_00366"/>
    </source>
</evidence>
<accession>C5B9B3</accession>
<gene>
    <name evidence="1" type="primary">rpoZ</name>
    <name type="ordered locus">NT01EI_0033</name>
</gene>
<name>RPOZ_EDWI9</name>
<comment type="function">
    <text evidence="1">Promotes RNA polymerase assembly. Latches the N- and C-terminal regions of the beta' subunit thereby facilitating its interaction with the beta and alpha subunits.</text>
</comment>
<comment type="catalytic activity">
    <reaction evidence="1">
        <text>RNA(n) + a ribonucleoside 5'-triphosphate = RNA(n+1) + diphosphate</text>
        <dbReference type="Rhea" id="RHEA:21248"/>
        <dbReference type="Rhea" id="RHEA-COMP:14527"/>
        <dbReference type="Rhea" id="RHEA-COMP:17342"/>
        <dbReference type="ChEBI" id="CHEBI:33019"/>
        <dbReference type="ChEBI" id="CHEBI:61557"/>
        <dbReference type="ChEBI" id="CHEBI:140395"/>
        <dbReference type="EC" id="2.7.7.6"/>
    </reaction>
</comment>
<comment type="subunit">
    <text evidence="1">The RNAP catalytic core consists of 2 alpha, 1 beta, 1 beta' and 1 omega subunit. When a sigma factor is associated with the core the holoenzyme is formed, which can initiate transcription.</text>
</comment>
<comment type="similarity">
    <text evidence="1">Belongs to the RNA polymerase subunit omega family.</text>
</comment>